<accession>A0T0S1</accession>
<comment type="subcellular location">
    <subcellularLocation>
        <location evidence="1">Plastid</location>
        <location evidence="1">Chloroplast thylakoid membrane</location>
        <topology evidence="1">Single-pass membrane protein</topology>
    </subcellularLocation>
</comment>
<comment type="similarity">
    <text evidence="1">Belongs to the PsaM family.</text>
</comment>
<sequence>MITDFQVYIALMAALLASVLAIRLGATLYQ</sequence>
<geneLocation type="chloroplast"/>
<evidence type="ECO:0000255" key="1">
    <source>
        <dbReference type="HAMAP-Rule" id="MF_00828"/>
    </source>
</evidence>
<evidence type="ECO:0007829" key="2">
    <source>
        <dbReference type="PDB" id="8XLS"/>
    </source>
</evidence>
<gene>
    <name evidence="1" type="primary">psaM</name>
</gene>
<name>PSAM_THAPS</name>
<dbReference type="EMBL" id="EF067921">
    <property type="protein sequence ID" value="ABK20756.1"/>
    <property type="molecule type" value="Genomic_DNA"/>
</dbReference>
<dbReference type="RefSeq" id="YP_874533.1">
    <property type="nucleotide sequence ID" value="NC_008589.1"/>
</dbReference>
<dbReference type="PDB" id="8XLS">
    <property type="method" value="EM"/>
    <property type="resolution" value="2.30 A"/>
    <property type="chains" value="M=1-30"/>
</dbReference>
<dbReference type="PDB" id="8ZEH">
    <property type="method" value="EM"/>
    <property type="resolution" value="2.78 A"/>
    <property type="chains" value="m=1-29"/>
</dbReference>
<dbReference type="PDB" id="8ZET">
    <property type="method" value="EM"/>
    <property type="resolution" value="3.20 A"/>
    <property type="chains" value="m=1-29"/>
</dbReference>
<dbReference type="PDBsum" id="8XLS"/>
<dbReference type="PDBsum" id="8ZEH"/>
<dbReference type="PDBsum" id="8ZET"/>
<dbReference type="EMDB" id="EMD-38457"/>
<dbReference type="EMDB" id="EMD-60032"/>
<dbReference type="EMDB" id="EMD-60044"/>
<dbReference type="SMR" id="A0T0S1"/>
<dbReference type="STRING" id="35128.A0T0S1"/>
<dbReference type="GeneID" id="4524739"/>
<dbReference type="InParanoid" id="A0T0S1"/>
<dbReference type="GO" id="GO:0009535">
    <property type="term" value="C:chloroplast thylakoid membrane"/>
    <property type="evidence" value="ECO:0007669"/>
    <property type="project" value="UniProtKB-SubCell"/>
</dbReference>
<dbReference type="GO" id="GO:0009522">
    <property type="term" value="C:photosystem I"/>
    <property type="evidence" value="ECO:0007669"/>
    <property type="project" value="UniProtKB-KW"/>
</dbReference>
<dbReference type="GO" id="GO:0015979">
    <property type="term" value="P:photosynthesis"/>
    <property type="evidence" value="ECO:0007669"/>
    <property type="project" value="UniProtKB-UniRule"/>
</dbReference>
<dbReference type="HAMAP" id="MF_00828">
    <property type="entry name" value="PSI_PsaM"/>
    <property type="match status" value="1"/>
</dbReference>
<dbReference type="InterPro" id="IPR010010">
    <property type="entry name" value="PSI_PsaM"/>
</dbReference>
<dbReference type="InterPro" id="IPR037279">
    <property type="entry name" value="PSI_PsaM_sf"/>
</dbReference>
<dbReference type="NCBIfam" id="TIGR03053">
    <property type="entry name" value="PS_I_psaM"/>
    <property type="match status" value="1"/>
</dbReference>
<dbReference type="Pfam" id="PF07465">
    <property type="entry name" value="PsaM"/>
    <property type="match status" value="1"/>
</dbReference>
<dbReference type="SUPFAM" id="SSF81548">
    <property type="entry name" value="Subunit XII of photosystem I reaction centre, PsaM"/>
    <property type="match status" value="1"/>
</dbReference>
<reference key="1">
    <citation type="journal article" date="2007" name="Mol. Genet. Genomics">
        <title>Chloroplast genomes of the diatoms Phaeodactylum tricornutum and Thalassiosira pseudonana: comparison with other plastid genomes of the red lineage.</title>
        <authorList>
            <person name="Oudot-Le Secq M.-P."/>
            <person name="Grimwood J."/>
            <person name="Shapiro H."/>
            <person name="Armbrust E.V."/>
            <person name="Bowler C."/>
            <person name="Green B.R."/>
        </authorList>
    </citation>
    <scope>NUCLEOTIDE SEQUENCE [LARGE SCALE GENOMIC DNA]</scope>
    <source>
        <strain>CCMP1335 / NEPCC58 / CCAP 1085/12</strain>
    </source>
</reference>
<protein>
    <recommendedName>
        <fullName evidence="1">Photosystem I reaction center subunit XII</fullName>
    </recommendedName>
    <alternativeName>
        <fullName evidence="1">PSI-M</fullName>
    </alternativeName>
</protein>
<organism>
    <name type="scientific">Thalassiosira pseudonana</name>
    <name type="common">Marine diatom</name>
    <name type="synonym">Cyclotella nana</name>
    <dbReference type="NCBI Taxonomy" id="35128"/>
    <lineage>
        <taxon>Eukaryota</taxon>
        <taxon>Sar</taxon>
        <taxon>Stramenopiles</taxon>
        <taxon>Ochrophyta</taxon>
        <taxon>Bacillariophyta</taxon>
        <taxon>Coscinodiscophyceae</taxon>
        <taxon>Thalassiosirophycidae</taxon>
        <taxon>Thalassiosirales</taxon>
        <taxon>Thalassiosiraceae</taxon>
        <taxon>Thalassiosira</taxon>
    </lineage>
</organism>
<proteinExistence type="evidence at protein level"/>
<feature type="chain" id="PRO_0000277411" description="Photosystem I reaction center subunit XII">
    <location>
        <begin position="1"/>
        <end position="30"/>
    </location>
</feature>
<feature type="transmembrane region" description="Helical" evidence="1">
    <location>
        <begin position="7"/>
        <end position="29"/>
    </location>
</feature>
<feature type="helix" evidence="2">
    <location>
        <begin position="4"/>
        <end position="29"/>
    </location>
</feature>
<keyword id="KW-0002">3D-structure</keyword>
<keyword id="KW-0150">Chloroplast</keyword>
<keyword id="KW-0472">Membrane</keyword>
<keyword id="KW-0602">Photosynthesis</keyword>
<keyword id="KW-0603">Photosystem I</keyword>
<keyword id="KW-0934">Plastid</keyword>
<keyword id="KW-0793">Thylakoid</keyword>
<keyword id="KW-0812">Transmembrane</keyword>
<keyword id="KW-1133">Transmembrane helix</keyword>